<reference key="1">
    <citation type="submission" date="2005-08" db="EMBL/GenBank/DDBJ databases">
        <title>Complete sequence of Chlorobium chlorochromatii CaD3.</title>
        <authorList>
            <consortium name="US DOE Joint Genome Institute"/>
            <person name="Copeland A."/>
            <person name="Lucas S."/>
            <person name="Lapidus A."/>
            <person name="Barry K."/>
            <person name="Detter J.C."/>
            <person name="Glavina T."/>
            <person name="Hammon N."/>
            <person name="Israni S."/>
            <person name="Pitluck S."/>
            <person name="Bryant D."/>
            <person name="Schmutz J."/>
            <person name="Larimer F."/>
            <person name="Land M."/>
            <person name="Kyrpides N."/>
            <person name="Ivanova N."/>
            <person name="Richardson P."/>
        </authorList>
    </citation>
    <scope>NUCLEOTIDE SEQUENCE [LARGE SCALE GENOMIC DNA]</scope>
    <source>
        <strain>CaD3</strain>
    </source>
</reference>
<proteinExistence type="inferred from homology"/>
<comment type="subcellular location">
    <subcellularLocation>
        <location evidence="1">Periplasm</location>
    </subcellularLocation>
</comment>
<comment type="similarity">
    <text evidence="3">Belongs to the TolB family.</text>
</comment>
<gene>
    <name type="primary">tolB</name>
    <name type="ordered locus">Cag_1910</name>
</gene>
<sequence length="440" mass="47362">MLPMPFFRKHVTCALLLCTPMLALPHPIIAADTEYIAIRKAGSTSIALVLDTFEVTTGTSPALARQATTLVRDGLDFTGLFTLLQPPLNVKTSSLFSSSTINFKALDSIGGAFYAVGTLSSSGGEITLDGQVFEVATGKVLFGKRYRGTESQLRALSHAFSGDVVEFLTGKKSVFGSQIVFISNKSGSKEIYSCDFDGANVHQLTNFRSIALTPALSPDGAYLAFTDFTGGKPALAIRELATGKTTRVAKKGNSIDPAWRNSRELATTFSFEGDQELYLLDSAGAVKQRLTSSSGIDLSPTFSPDGRKMAFVSARSGNPQIFVYDFSSGKSQRLTFSGRYNTQPAWSPIGDKIAFSTWESGGEINIFVINTDGSGLTQLTTQSGENESPSWSPDGRMIVFASNRQGVKKLYVMMADGKNQRPLLAIGGEQTQPSWSLFSR</sequence>
<accession>Q3APB5</accession>
<feature type="signal peptide" evidence="2">
    <location>
        <begin position="1"/>
        <end position="30"/>
    </location>
</feature>
<feature type="chain" id="PRO_0000259042" description="Protein TolB homolog" evidence="2">
    <location>
        <begin position="31"/>
        <end position="440"/>
    </location>
</feature>
<protein>
    <recommendedName>
        <fullName evidence="3">Protein TolB homolog</fullName>
    </recommendedName>
</protein>
<keyword id="KW-0574">Periplasm</keyword>
<keyword id="KW-0732">Signal</keyword>
<dbReference type="EMBL" id="CP000108">
    <property type="protein sequence ID" value="ABB29160.1"/>
    <property type="molecule type" value="Genomic_DNA"/>
</dbReference>
<dbReference type="SMR" id="Q3APB5"/>
<dbReference type="STRING" id="340177.Cag_1910"/>
<dbReference type="KEGG" id="cch:Cag_1910"/>
<dbReference type="eggNOG" id="COG0823">
    <property type="taxonomic scope" value="Bacteria"/>
</dbReference>
<dbReference type="HOGENOM" id="CLU_047123_2_0_10"/>
<dbReference type="OrthoDB" id="9815657at2"/>
<dbReference type="GO" id="GO:0042597">
    <property type="term" value="C:periplasmic space"/>
    <property type="evidence" value="ECO:0007669"/>
    <property type="project" value="UniProtKB-SubCell"/>
</dbReference>
<dbReference type="GO" id="GO:0017038">
    <property type="term" value="P:protein import"/>
    <property type="evidence" value="ECO:0007669"/>
    <property type="project" value="InterPro"/>
</dbReference>
<dbReference type="Gene3D" id="2.120.10.30">
    <property type="entry name" value="TolB, C-terminal domain"/>
    <property type="match status" value="2"/>
</dbReference>
<dbReference type="Gene3D" id="3.40.50.10070">
    <property type="entry name" value="TolB, N-terminal domain"/>
    <property type="match status" value="1"/>
</dbReference>
<dbReference type="InterPro" id="IPR011042">
    <property type="entry name" value="6-blade_b-propeller_TolB-like"/>
</dbReference>
<dbReference type="InterPro" id="IPR011659">
    <property type="entry name" value="PD40"/>
</dbReference>
<dbReference type="InterPro" id="IPR014167">
    <property type="entry name" value="Tol-Pal_TolB"/>
</dbReference>
<dbReference type="InterPro" id="IPR007195">
    <property type="entry name" value="TolB_N"/>
</dbReference>
<dbReference type="NCBIfam" id="TIGR02800">
    <property type="entry name" value="propeller_TolB"/>
    <property type="match status" value="1"/>
</dbReference>
<dbReference type="PANTHER" id="PTHR36842:SF1">
    <property type="entry name" value="PROTEIN TOLB"/>
    <property type="match status" value="1"/>
</dbReference>
<dbReference type="PANTHER" id="PTHR36842">
    <property type="entry name" value="PROTEIN TOLB HOMOLOG"/>
    <property type="match status" value="1"/>
</dbReference>
<dbReference type="Pfam" id="PF07676">
    <property type="entry name" value="PD40"/>
    <property type="match status" value="4"/>
</dbReference>
<dbReference type="Pfam" id="PF04052">
    <property type="entry name" value="TolB_N"/>
    <property type="match status" value="1"/>
</dbReference>
<dbReference type="SUPFAM" id="SSF52964">
    <property type="entry name" value="TolB, N-terminal domain"/>
    <property type="match status" value="1"/>
</dbReference>
<dbReference type="SUPFAM" id="SSF69304">
    <property type="entry name" value="Tricorn protease N-terminal domain"/>
    <property type="match status" value="1"/>
</dbReference>
<name>TOLB_CHLCH</name>
<organism>
    <name type="scientific">Chlorobium chlorochromatii (strain CaD3)</name>
    <dbReference type="NCBI Taxonomy" id="340177"/>
    <lineage>
        <taxon>Bacteria</taxon>
        <taxon>Pseudomonadati</taxon>
        <taxon>Chlorobiota</taxon>
        <taxon>Chlorobiia</taxon>
        <taxon>Chlorobiales</taxon>
        <taxon>Chlorobiaceae</taxon>
        <taxon>Chlorobium/Pelodictyon group</taxon>
        <taxon>Chlorobium</taxon>
    </lineage>
</organism>
<evidence type="ECO:0000250" key="1">
    <source>
        <dbReference type="UniProtKB" id="P0A855"/>
    </source>
</evidence>
<evidence type="ECO:0000255" key="2"/>
<evidence type="ECO:0000305" key="3"/>